<comment type="function">
    <text evidence="1">One of the primary rRNA binding proteins, it binds directly to 16S rRNA where it nucleates assembly of the head domain of the 30S subunit. Is located at the subunit interface close to the decoding center, probably blocks exit of the E-site tRNA.</text>
</comment>
<comment type="subunit">
    <text evidence="1">Part of the 30S ribosomal subunit. Contacts proteins S9 and S11.</text>
</comment>
<comment type="similarity">
    <text evidence="1">Belongs to the universal ribosomal protein uS7 family.</text>
</comment>
<proteinExistence type="inferred from homology"/>
<accession>B0BC75</accession>
<protein>
    <recommendedName>
        <fullName evidence="1">Small ribosomal subunit protein uS7</fullName>
    </recommendedName>
    <alternativeName>
        <fullName evidence="2">30S ribosomal protein S7</fullName>
    </alternativeName>
</protein>
<reference key="1">
    <citation type="journal article" date="2008" name="Genome Res.">
        <title>Chlamydia trachomatis: genome sequence analysis of lymphogranuloma venereum isolates.</title>
        <authorList>
            <person name="Thomson N.R."/>
            <person name="Holden M.T.G."/>
            <person name="Carder C."/>
            <person name="Lennard N."/>
            <person name="Lockey S.J."/>
            <person name="Marsh P."/>
            <person name="Skipp P."/>
            <person name="O'Connor C.D."/>
            <person name="Goodhead I."/>
            <person name="Norbertzcak H."/>
            <person name="Harris B."/>
            <person name="Ormond D."/>
            <person name="Rance R."/>
            <person name="Quail M.A."/>
            <person name="Parkhill J."/>
            <person name="Stephens R.S."/>
            <person name="Clarke I.N."/>
        </authorList>
    </citation>
    <scope>NUCLEOTIDE SEQUENCE [LARGE SCALE GENOMIC DNA]</scope>
    <source>
        <strain>UCH-1/proctitis</strain>
    </source>
</reference>
<keyword id="KW-0687">Ribonucleoprotein</keyword>
<keyword id="KW-0689">Ribosomal protein</keyword>
<keyword id="KW-0694">RNA-binding</keyword>
<keyword id="KW-0699">rRNA-binding</keyword>
<keyword id="KW-0820">tRNA-binding</keyword>
<evidence type="ECO:0000255" key="1">
    <source>
        <dbReference type="HAMAP-Rule" id="MF_00480"/>
    </source>
</evidence>
<evidence type="ECO:0000305" key="2"/>
<dbReference type="EMBL" id="AM884177">
    <property type="protein sequence ID" value="CAP07090.1"/>
    <property type="molecule type" value="Genomic_DNA"/>
</dbReference>
<dbReference type="RefSeq" id="WP_009872655.1">
    <property type="nucleotide sequence ID" value="NC_010280.2"/>
</dbReference>
<dbReference type="SMR" id="B0BC75"/>
<dbReference type="KEGG" id="ctl:CTLon_0693"/>
<dbReference type="HOGENOM" id="CLU_072226_1_1_0"/>
<dbReference type="Proteomes" id="UP001154401">
    <property type="component" value="Chromosome"/>
</dbReference>
<dbReference type="GO" id="GO:0015935">
    <property type="term" value="C:small ribosomal subunit"/>
    <property type="evidence" value="ECO:0007669"/>
    <property type="project" value="InterPro"/>
</dbReference>
<dbReference type="GO" id="GO:0019843">
    <property type="term" value="F:rRNA binding"/>
    <property type="evidence" value="ECO:0007669"/>
    <property type="project" value="UniProtKB-UniRule"/>
</dbReference>
<dbReference type="GO" id="GO:0003735">
    <property type="term" value="F:structural constituent of ribosome"/>
    <property type="evidence" value="ECO:0007669"/>
    <property type="project" value="InterPro"/>
</dbReference>
<dbReference type="GO" id="GO:0000049">
    <property type="term" value="F:tRNA binding"/>
    <property type="evidence" value="ECO:0007669"/>
    <property type="project" value="UniProtKB-UniRule"/>
</dbReference>
<dbReference type="GO" id="GO:0006412">
    <property type="term" value="P:translation"/>
    <property type="evidence" value="ECO:0007669"/>
    <property type="project" value="UniProtKB-UniRule"/>
</dbReference>
<dbReference type="CDD" id="cd14869">
    <property type="entry name" value="uS7_Bacteria"/>
    <property type="match status" value="1"/>
</dbReference>
<dbReference type="FunFam" id="1.10.455.10:FF:000001">
    <property type="entry name" value="30S ribosomal protein S7"/>
    <property type="match status" value="1"/>
</dbReference>
<dbReference type="Gene3D" id="1.10.455.10">
    <property type="entry name" value="Ribosomal protein S7 domain"/>
    <property type="match status" value="1"/>
</dbReference>
<dbReference type="HAMAP" id="MF_00480_B">
    <property type="entry name" value="Ribosomal_uS7_B"/>
    <property type="match status" value="1"/>
</dbReference>
<dbReference type="InterPro" id="IPR000235">
    <property type="entry name" value="Ribosomal_uS7"/>
</dbReference>
<dbReference type="InterPro" id="IPR005717">
    <property type="entry name" value="Ribosomal_uS7_bac/org-type"/>
</dbReference>
<dbReference type="InterPro" id="IPR020606">
    <property type="entry name" value="Ribosomal_uS7_CS"/>
</dbReference>
<dbReference type="InterPro" id="IPR023798">
    <property type="entry name" value="Ribosomal_uS7_dom"/>
</dbReference>
<dbReference type="InterPro" id="IPR036823">
    <property type="entry name" value="Ribosomal_uS7_dom_sf"/>
</dbReference>
<dbReference type="NCBIfam" id="TIGR01029">
    <property type="entry name" value="rpsG_bact"/>
    <property type="match status" value="1"/>
</dbReference>
<dbReference type="PANTHER" id="PTHR11205">
    <property type="entry name" value="RIBOSOMAL PROTEIN S7"/>
    <property type="match status" value="1"/>
</dbReference>
<dbReference type="Pfam" id="PF00177">
    <property type="entry name" value="Ribosomal_S7"/>
    <property type="match status" value="1"/>
</dbReference>
<dbReference type="PIRSF" id="PIRSF002122">
    <property type="entry name" value="RPS7p_RPS7a_RPS5e_RPS7o"/>
    <property type="match status" value="1"/>
</dbReference>
<dbReference type="SUPFAM" id="SSF47973">
    <property type="entry name" value="Ribosomal protein S7"/>
    <property type="match status" value="1"/>
</dbReference>
<dbReference type="PROSITE" id="PS00052">
    <property type="entry name" value="RIBOSOMAL_S7"/>
    <property type="match status" value="1"/>
</dbReference>
<name>RS7_CHLTB</name>
<organism>
    <name type="scientific">Chlamydia trachomatis serovar L2b (strain UCH-1/proctitis)</name>
    <dbReference type="NCBI Taxonomy" id="471473"/>
    <lineage>
        <taxon>Bacteria</taxon>
        <taxon>Pseudomonadati</taxon>
        <taxon>Chlamydiota</taxon>
        <taxon>Chlamydiia</taxon>
        <taxon>Chlamydiales</taxon>
        <taxon>Chlamydiaceae</taxon>
        <taxon>Chlamydia/Chlamydophila group</taxon>
        <taxon>Chlamydia</taxon>
    </lineage>
</organism>
<gene>
    <name evidence="1" type="primary">rpsG</name>
    <name type="ordered locus">CTLon_0693</name>
</gene>
<sequence>MSRRHAAEKKVIPGDPVYGSVVLERFINKVMLHGKKSIARKIVYGALERFAKRLGLENPLEGFEEALENAKPILEVRSRRVGGATYQVPVEVAPDRRSCLAMQWIIKHARSKPGKCMEVGLANELIDCFNKQGATIKKREDTHRMAEANKAFAHYKW</sequence>
<feature type="chain" id="PRO_1000125917" description="Small ribosomal subunit protein uS7">
    <location>
        <begin position="1"/>
        <end position="157"/>
    </location>
</feature>